<sequence>MKFLDQAKIFVKSGDGGAGCCSFRREKHIEFGGPDGGDGGRGGDVILECVANLNTLIDYRYQQHFKAKIGNHGQGRNKTGGKGDDVILKVPVGTQVLDEEKETVLADLTSAGQTMVLLRGGDGGFGNMHYKSSTNQAPRRADEGWPGEERWIWLRLKMIADAGLVGLPNAGKSTFLAAVTRARPKIADYPFTTLHPNLGVVTLGEEEFVIADIPGLIEGAHEGAGIGDRFLGHIERCRVLLHLIDGTQDDVAEAYRVVRHELAAYGGGLDEKPEVVALNKCDSLTADDIELKLMELSEACGQEVLPLSGVSGVGLKPILARLFTHIREAREAEPAVPAASPIFGSSKRGAPTFQQRKRKLQAEDDEFAGGHWGADGEWIWHSADNDGDEVDEDYDDEDLEEVADDEEDDAEE</sequence>
<keyword id="KW-0963">Cytoplasm</keyword>
<keyword id="KW-0342">GTP-binding</keyword>
<keyword id="KW-0378">Hydrolase</keyword>
<keyword id="KW-0460">Magnesium</keyword>
<keyword id="KW-0479">Metal-binding</keyword>
<keyword id="KW-0547">Nucleotide-binding</keyword>
<gene>
    <name evidence="1" type="primary">obg</name>
    <name type="ordered locus">amb4079</name>
</gene>
<comment type="function">
    <text evidence="1">An essential GTPase which binds GTP, GDP and possibly (p)ppGpp with moderate affinity, with high nucleotide exchange rates and a fairly low GTP hydrolysis rate. Plays a role in control of the cell cycle, stress response, ribosome biogenesis and in those bacteria that undergo differentiation, in morphogenesis control.</text>
</comment>
<comment type="cofactor">
    <cofactor evidence="1">
        <name>Mg(2+)</name>
        <dbReference type="ChEBI" id="CHEBI:18420"/>
    </cofactor>
</comment>
<comment type="subunit">
    <text evidence="1">Monomer.</text>
</comment>
<comment type="subcellular location">
    <subcellularLocation>
        <location evidence="1">Cytoplasm</location>
    </subcellularLocation>
</comment>
<comment type="similarity">
    <text evidence="1">Belongs to the TRAFAC class OBG-HflX-like GTPase superfamily. OBG GTPase family.</text>
</comment>
<name>OBG_PARM1</name>
<organism>
    <name type="scientific">Paramagnetospirillum magneticum (strain ATCC 700264 / AMB-1)</name>
    <name type="common">Magnetospirillum magneticum</name>
    <dbReference type="NCBI Taxonomy" id="342108"/>
    <lineage>
        <taxon>Bacteria</taxon>
        <taxon>Pseudomonadati</taxon>
        <taxon>Pseudomonadota</taxon>
        <taxon>Alphaproteobacteria</taxon>
        <taxon>Rhodospirillales</taxon>
        <taxon>Magnetospirillaceae</taxon>
        <taxon>Paramagnetospirillum</taxon>
    </lineage>
</organism>
<protein>
    <recommendedName>
        <fullName evidence="1">GTPase Obg</fullName>
        <ecNumber evidence="1">3.6.5.-</ecNumber>
    </recommendedName>
    <alternativeName>
        <fullName evidence="1">GTP-binding protein Obg</fullName>
    </alternativeName>
</protein>
<feature type="chain" id="PRO_0000386029" description="GTPase Obg">
    <location>
        <begin position="1"/>
        <end position="412"/>
    </location>
</feature>
<feature type="domain" description="Obg" evidence="2">
    <location>
        <begin position="1"/>
        <end position="159"/>
    </location>
</feature>
<feature type="domain" description="OBG-type G" evidence="1">
    <location>
        <begin position="160"/>
        <end position="327"/>
    </location>
</feature>
<feature type="region of interest" description="Disordered" evidence="3">
    <location>
        <begin position="335"/>
        <end position="412"/>
    </location>
</feature>
<feature type="compositionally biased region" description="Acidic residues" evidence="3">
    <location>
        <begin position="385"/>
        <end position="412"/>
    </location>
</feature>
<feature type="binding site" evidence="1">
    <location>
        <begin position="166"/>
        <end position="173"/>
    </location>
    <ligand>
        <name>GTP</name>
        <dbReference type="ChEBI" id="CHEBI:37565"/>
    </ligand>
</feature>
<feature type="binding site" evidence="1">
    <location>
        <position position="173"/>
    </location>
    <ligand>
        <name>Mg(2+)</name>
        <dbReference type="ChEBI" id="CHEBI:18420"/>
    </ligand>
</feature>
<feature type="binding site" evidence="1">
    <location>
        <begin position="191"/>
        <end position="195"/>
    </location>
    <ligand>
        <name>GTP</name>
        <dbReference type="ChEBI" id="CHEBI:37565"/>
    </ligand>
</feature>
<feature type="binding site" evidence="1">
    <location>
        <position position="193"/>
    </location>
    <ligand>
        <name>Mg(2+)</name>
        <dbReference type="ChEBI" id="CHEBI:18420"/>
    </ligand>
</feature>
<feature type="binding site" evidence="1">
    <location>
        <begin position="212"/>
        <end position="215"/>
    </location>
    <ligand>
        <name>GTP</name>
        <dbReference type="ChEBI" id="CHEBI:37565"/>
    </ligand>
</feature>
<feature type="binding site" evidence="1">
    <location>
        <begin position="279"/>
        <end position="282"/>
    </location>
    <ligand>
        <name>GTP</name>
        <dbReference type="ChEBI" id="CHEBI:37565"/>
    </ligand>
</feature>
<feature type="binding site" evidence="1">
    <location>
        <begin position="308"/>
        <end position="310"/>
    </location>
    <ligand>
        <name>GTP</name>
        <dbReference type="ChEBI" id="CHEBI:37565"/>
    </ligand>
</feature>
<reference key="1">
    <citation type="journal article" date="2005" name="DNA Res.">
        <title>Complete genome sequence of the facultative anaerobic magnetotactic bacterium Magnetospirillum sp. strain AMB-1.</title>
        <authorList>
            <person name="Matsunaga T."/>
            <person name="Okamura Y."/>
            <person name="Fukuda Y."/>
            <person name="Wahyudi A.T."/>
            <person name="Murase Y."/>
            <person name="Takeyama H."/>
        </authorList>
    </citation>
    <scope>NUCLEOTIDE SEQUENCE [LARGE SCALE GENOMIC DNA]</scope>
    <source>
        <strain>ATCC 700264 / AMB-1</strain>
    </source>
</reference>
<dbReference type="EC" id="3.6.5.-" evidence="1"/>
<dbReference type="EMBL" id="AP007255">
    <property type="protein sequence ID" value="BAE52883.1"/>
    <property type="molecule type" value="Genomic_DNA"/>
</dbReference>
<dbReference type="RefSeq" id="WP_011386429.1">
    <property type="nucleotide sequence ID" value="NC_007626.1"/>
</dbReference>
<dbReference type="SMR" id="Q2VZU2"/>
<dbReference type="STRING" id="342108.amb4079"/>
<dbReference type="KEGG" id="mag:amb4079"/>
<dbReference type="HOGENOM" id="CLU_011747_2_0_5"/>
<dbReference type="OrthoDB" id="9807318at2"/>
<dbReference type="Proteomes" id="UP000007058">
    <property type="component" value="Chromosome"/>
</dbReference>
<dbReference type="GO" id="GO:0005737">
    <property type="term" value="C:cytoplasm"/>
    <property type="evidence" value="ECO:0007669"/>
    <property type="project" value="UniProtKB-SubCell"/>
</dbReference>
<dbReference type="GO" id="GO:0005525">
    <property type="term" value="F:GTP binding"/>
    <property type="evidence" value="ECO:0007669"/>
    <property type="project" value="UniProtKB-UniRule"/>
</dbReference>
<dbReference type="GO" id="GO:0003924">
    <property type="term" value="F:GTPase activity"/>
    <property type="evidence" value="ECO:0007669"/>
    <property type="project" value="UniProtKB-UniRule"/>
</dbReference>
<dbReference type="GO" id="GO:0000287">
    <property type="term" value="F:magnesium ion binding"/>
    <property type="evidence" value="ECO:0007669"/>
    <property type="project" value="InterPro"/>
</dbReference>
<dbReference type="GO" id="GO:0042254">
    <property type="term" value="P:ribosome biogenesis"/>
    <property type="evidence" value="ECO:0007669"/>
    <property type="project" value="UniProtKB-UniRule"/>
</dbReference>
<dbReference type="CDD" id="cd01898">
    <property type="entry name" value="Obg"/>
    <property type="match status" value="1"/>
</dbReference>
<dbReference type="FunFam" id="2.70.210.12:FF:000001">
    <property type="entry name" value="GTPase Obg"/>
    <property type="match status" value="1"/>
</dbReference>
<dbReference type="Gene3D" id="2.70.210.12">
    <property type="entry name" value="GTP1/OBG domain"/>
    <property type="match status" value="1"/>
</dbReference>
<dbReference type="Gene3D" id="3.40.50.300">
    <property type="entry name" value="P-loop containing nucleotide triphosphate hydrolases"/>
    <property type="match status" value="1"/>
</dbReference>
<dbReference type="HAMAP" id="MF_01454">
    <property type="entry name" value="GTPase_Obg"/>
    <property type="match status" value="1"/>
</dbReference>
<dbReference type="InterPro" id="IPR031167">
    <property type="entry name" value="G_OBG"/>
</dbReference>
<dbReference type="InterPro" id="IPR006073">
    <property type="entry name" value="GTP-bd"/>
</dbReference>
<dbReference type="InterPro" id="IPR014100">
    <property type="entry name" value="GTP-bd_Obg/CgtA"/>
</dbReference>
<dbReference type="InterPro" id="IPR006074">
    <property type="entry name" value="GTP1-OBG_CS"/>
</dbReference>
<dbReference type="InterPro" id="IPR006169">
    <property type="entry name" value="GTP1_OBG_dom"/>
</dbReference>
<dbReference type="InterPro" id="IPR036726">
    <property type="entry name" value="GTP1_OBG_dom_sf"/>
</dbReference>
<dbReference type="InterPro" id="IPR045086">
    <property type="entry name" value="OBG_GTPase"/>
</dbReference>
<dbReference type="InterPro" id="IPR027417">
    <property type="entry name" value="P-loop_NTPase"/>
</dbReference>
<dbReference type="NCBIfam" id="TIGR02729">
    <property type="entry name" value="Obg_CgtA"/>
    <property type="match status" value="1"/>
</dbReference>
<dbReference type="NCBIfam" id="NF008955">
    <property type="entry name" value="PRK12297.1"/>
    <property type="match status" value="1"/>
</dbReference>
<dbReference type="NCBIfam" id="NF008956">
    <property type="entry name" value="PRK12299.1"/>
    <property type="match status" value="1"/>
</dbReference>
<dbReference type="PANTHER" id="PTHR11702">
    <property type="entry name" value="DEVELOPMENTALLY REGULATED GTP-BINDING PROTEIN-RELATED"/>
    <property type="match status" value="1"/>
</dbReference>
<dbReference type="PANTHER" id="PTHR11702:SF31">
    <property type="entry name" value="MITOCHONDRIAL RIBOSOME-ASSOCIATED GTPASE 2"/>
    <property type="match status" value="1"/>
</dbReference>
<dbReference type="Pfam" id="PF01018">
    <property type="entry name" value="GTP1_OBG"/>
    <property type="match status" value="1"/>
</dbReference>
<dbReference type="Pfam" id="PF01926">
    <property type="entry name" value="MMR_HSR1"/>
    <property type="match status" value="1"/>
</dbReference>
<dbReference type="PIRSF" id="PIRSF002401">
    <property type="entry name" value="GTP_bd_Obg/CgtA"/>
    <property type="match status" value="1"/>
</dbReference>
<dbReference type="PRINTS" id="PR00326">
    <property type="entry name" value="GTP1OBG"/>
</dbReference>
<dbReference type="SUPFAM" id="SSF82051">
    <property type="entry name" value="Obg GTP-binding protein N-terminal domain"/>
    <property type="match status" value="1"/>
</dbReference>
<dbReference type="SUPFAM" id="SSF52540">
    <property type="entry name" value="P-loop containing nucleoside triphosphate hydrolases"/>
    <property type="match status" value="1"/>
</dbReference>
<dbReference type="PROSITE" id="PS51710">
    <property type="entry name" value="G_OBG"/>
    <property type="match status" value="1"/>
</dbReference>
<dbReference type="PROSITE" id="PS00905">
    <property type="entry name" value="GTP1_OBG"/>
    <property type="match status" value="1"/>
</dbReference>
<dbReference type="PROSITE" id="PS51883">
    <property type="entry name" value="OBG"/>
    <property type="match status" value="1"/>
</dbReference>
<accession>Q2VZU2</accession>
<evidence type="ECO:0000255" key="1">
    <source>
        <dbReference type="HAMAP-Rule" id="MF_01454"/>
    </source>
</evidence>
<evidence type="ECO:0000255" key="2">
    <source>
        <dbReference type="PROSITE-ProRule" id="PRU01231"/>
    </source>
</evidence>
<evidence type="ECO:0000256" key="3">
    <source>
        <dbReference type="SAM" id="MobiDB-lite"/>
    </source>
</evidence>
<proteinExistence type="inferred from homology"/>